<accession>A3QF02</accession>
<protein>
    <recommendedName>
        <fullName evidence="1">Probable septum site-determining protein MinC</fullName>
    </recommendedName>
</protein>
<proteinExistence type="inferred from homology"/>
<comment type="function">
    <text evidence="1">Cell division inhibitor that blocks the formation of polar Z ring septums. Rapidly oscillates between the poles of the cell to destabilize FtsZ filaments that have formed before they mature into polar Z rings. Prevents FtsZ polymerization.</text>
</comment>
<comment type="subunit">
    <text evidence="1">Interacts with MinD and FtsZ.</text>
</comment>
<comment type="similarity">
    <text evidence="1">Belongs to the MinC family.</text>
</comment>
<dbReference type="EMBL" id="CP000606">
    <property type="protein sequence ID" value="ABO24050.1"/>
    <property type="molecule type" value="Genomic_DNA"/>
</dbReference>
<dbReference type="RefSeq" id="WP_011865982.1">
    <property type="nucleotide sequence ID" value="NC_009092.1"/>
</dbReference>
<dbReference type="SMR" id="A3QF02"/>
<dbReference type="STRING" id="323850.Shew_2184"/>
<dbReference type="KEGG" id="slo:Shew_2184"/>
<dbReference type="eggNOG" id="COG0850">
    <property type="taxonomic scope" value="Bacteria"/>
</dbReference>
<dbReference type="HOGENOM" id="CLU_067812_0_1_6"/>
<dbReference type="OrthoDB" id="9794530at2"/>
<dbReference type="Proteomes" id="UP000001558">
    <property type="component" value="Chromosome"/>
</dbReference>
<dbReference type="GO" id="GO:0000902">
    <property type="term" value="P:cell morphogenesis"/>
    <property type="evidence" value="ECO:0007669"/>
    <property type="project" value="InterPro"/>
</dbReference>
<dbReference type="GO" id="GO:0000917">
    <property type="term" value="P:division septum assembly"/>
    <property type="evidence" value="ECO:0007669"/>
    <property type="project" value="UniProtKB-KW"/>
</dbReference>
<dbReference type="GO" id="GO:0051302">
    <property type="term" value="P:regulation of cell division"/>
    <property type="evidence" value="ECO:0007669"/>
    <property type="project" value="InterPro"/>
</dbReference>
<dbReference type="GO" id="GO:1901891">
    <property type="term" value="P:regulation of cell septum assembly"/>
    <property type="evidence" value="ECO:0007669"/>
    <property type="project" value="InterPro"/>
</dbReference>
<dbReference type="Gene3D" id="2.160.20.70">
    <property type="match status" value="1"/>
</dbReference>
<dbReference type="Gene3D" id="3.30.70.260">
    <property type="match status" value="1"/>
</dbReference>
<dbReference type="HAMAP" id="MF_00267">
    <property type="entry name" value="MinC"/>
    <property type="match status" value="1"/>
</dbReference>
<dbReference type="InterPro" id="IPR016098">
    <property type="entry name" value="CAP/MinC_C"/>
</dbReference>
<dbReference type="InterPro" id="IPR013033">
    <property type="entry name" value="MinC"/>
</dbReference>
<dbReference type="InterPro" id="IPR036145">
    <property type="entry name" value="MinC_C_sf"/>
</dbReference>
<dbReference type="InterPro" id="IPR007874">
    <property type="entry name" value="MinC_N"/>
</dbReference>
<dbReference type="InterPro" id="IPR005526">
    <property type="entry name" value="Septum_form_inhib_MinC_C"/>
</dbReference>
<dbReference type="NCBIfam" id="TIGR01222">
    <property type="entry name" value="minC"/>
    <property type="match status" value="1"/>
</dbReference>
<dbReference type="PANTHER" id="PTHR34108">
    <property type="entry name" value="SEPTUM SITE-DETERMINING PROTEIN MINC"/>
    <property type="match status" value="1"/>
</dbReference>
<dbReference type="PANTHER" id="PTHR34108:SF1">
    <property type="entry name" value="SEPTUM SITE-DETERMINING PROTEIN MINC"/>
    <property type="match status" value="1"/>
</dbReference>
<dbReference type="Pfam" id="PF03775">
    <property type="entry name" value="MinC_C"/>
    <property type="match status" value="1"/>
</dbReference>
<dbReference type="Pfam" id="PF05209">
    <property type="entry name" value="MinC_N"/>
    <property type="match status" value="1"/>
</dbReference>
<dbReference type="SUPFAM" id="SSF63848">
    <property type="entry name" value="Cell-division inhibitor MinC, C-terminal domain"/>
    <property type="match status" value="1"/>
</dbReference>
<reference key="1">
    <citation type="submission" date="2007-03" db="EMBL/GenBank/DDBJ databases">
        <title>Complete sequence of Shewanella loihica PV-4.</title>
        <authorList>
            <consortium name="US DOE Joint Genome Institute"/>
            <person name="Copeland A."/>
            <person name="Lucas S."/>
            <person name="Lapidus A."/>
            <person name="Barry K."/>
            <person name="Detter J.C."/>
            <person name="Glavina del Rio T."/>
            <person name="Hammon N."/>
            <person name="Israni S."/>
            <person name="Dalin E."/>
            <person name="Tice H."/>
            <person name="Pitluck S."/>
            <person name="Chain P."/>
            <person name="Malfatti S."/>
            <person name="Shin M."/>
            <person name="Vergez L."/>
            <person name="Schmutz J."/>
            <person name="Larimer F."/>
            <person name="Land M."/>
            <person name="Hauser L."/>
            <person name="Kyrpides N."/>
            <person name="Mikhailova N."/>
            <person name="Romine M.F."/>
            <person name="Serres G."/>
            <person name="Fredrickson J."/>
            <person name="Tiedje J."/>
            <person name="Richardson P."/>
        </authorList>
    </citation>
    <scope>NUCLEOTIDE SEQUENCE [LARGE SCALE GENOMIC DNA]</scope>
    <source>
        <strain>ATCC BAA-1088 / PV-4</strain>
    </source>
</reference>
<sequence>MQKPSLELKGSSFTLSVLHINDADLDGVARELDDKLAIAPQFFLGAPLVVNLSAISDPDYNLAGLKDLLISRQLVIVGITGAPSAIANQAKALGLALIKSGKQSQTQPQLPKTTKIVKQNIRSGQQIYAQNGDLIIIGAVGNGAEVIADGSIHIYGSLRGKAMAGANGDKNAVIIAQNIDAELVSIAGQYWLTENLQAHASIKSGCIRLDGDSLTVEALSL</sequence>
<evidence type="ECO:0000255" key="1">
    <source>
        <dbReference type="HAMAP-Rule" id="MF_00267"/>
    </source>
</evidence>
<gene>
    <name evidence="1" type="primary">minC</name>
    <name type="ordered locus">Shew_2184</name>
</gene>
<keyword id="KW-0131">Cell cycle</keyword>
<keyword id="KW-0132">Cell division</keyword>
<keyword id="KW-1185">Reference proteome</keyword>
<keyword id="KW-0717">Septation</keyword>
<feature type="chain" id="PRO_1000047859" description="Probable septum site-determining protein MinC">
    <location>
        <begin position="1"/>
        <end position="221"/>
    </location>
</feature>
<name>MINC_SHELP</name>
<organism>
    <name type="scientific">Shewanella loihica (strain ATCC BAA-1088 / PV-4)</name>
    <dbReference type="NCBI Taxonomy" id="323850"/>
    <lineage>
        <taxon>Bacteria</taxon>
        <taxon>Pseudomonadati</taxon>
        <taxon>Pseudomonadota</taxon>
        <taxon>Gammaproteobacteria</taxon>
        <taxon>Alteromonadales</taxon>
        <taxon>Shewanellaceae</taxon>
        <taxon>Shewanella</taxon>
    </lineage>
</organism>